<accession>B6EMX8</accession>
<dbReference type="EC" id="2.5.1.145" evidence="1"/>
<dbReference type="EMBL" id="FM178379">
    <property type="protein sequence ID" value="CAQ78257.1"/>
    <property type="molecule type" value="Genomic_DNA"/>
</dbReference>
<dbReference type="RefSeq" id="WP_012549380.1">
    <property type="nucleotide sequence ID" value="NC_011312.1"/>
</dbReference>
<dbReference type="SMR" id="B6EMX8"/>
<dbReference type="KEGG" id="vsa:VSAL_I0572"/>
<dbReference type="eggNOG" id="COG0682">
    <property type="taxonomic scope" value="Bacteria"/>
</dbReference>
<dbReference type="HOGENOM" id="CLU_013386_1_0_6"/>
<dbReference type="UniPathway" id="UPA00664"/>
<dbReference type="Proteomes" id="UP000001730">
    <property type="component" value="Chromosome 1"/>
</dbReference>
<dbReference type="GO" id="GO:0005886">
    <property type="term" value="C:plasma membrane"/>
    <property type="evidence" value="ECO:0007669"/>
    <property type="project" value="UniProtKB-SubCell"/>
</dbReference>
<dbReference type="GO" id="GO:0008961">
    <property type="term" value="F:phosphatidylglycerol-prolipoprotein diacylglyceryl transferase activity"/>
    <property type="evidence" value="ECO:0007669"/>
    <property type="project" value="UniProtKB-UniRule"/>
</dbReference>
<dbReference type="GO" id="GO:0042158">
    <property type="term" value="P:lipoprotein biosynthetic process"/>
    <property type="evidence" value="ECO:0007669"/>
    <property type="project" value="UniProtKB-UniRule"/>
</dbReference>
<dbReference type="HAMAP" id="MF_01147">
    <property type="entry name" value="Lgt"/>
    <property type="match status" value="1"/>
</dbReference>
<dbReference type="InterPro" id="IPR001640">
    <property type="entry name" value="Lgt"/>
</dbReference>
<dbReference type="NCBIfam" id="TIGR00544">
    <property type="entry name" value="lgt"/>
    <property type="match status" value="1"/>
</dbReference>
<dbReference type="PANTHER" id="PTHR30589:SF0">
    <property type="entry name" value="PHOSPHATIDYLGLYCEROL--PROLIPOPROTEIN DIACYLGLYCERYL TRANSFERASE"/>
    <property type="match status" value="1"/>
</dbReference>
<dbReference type="PANTHER" id="PTHR30589">
    <property type="entry name" value="PROLIPOPROTEIN DIACYLGLYCERYL TRANSFERASE"/>
    <property type="match status" value="1"/>
</dbReference>
<dbReference type="Pfam" id="PF01790">
    <property type="entry name" value="LGT"/>
    <property type="match status" value="1"/>
</dbReference>
<dbReference type="PROSITE" id="PS01311">
    <property type="entry name" value="LGT"/>
    <property type="match status" value="1"/>
</dbReference>
<gene>
    <name evidence="1" type="primary">lgt</name>
    <name type="ordered locus">VSAL_I0572</name>
</gene>
<protein>
    <recommendedName>
        <fullName evidence="1">Phosphatidylglycerol--prolipoprotein diacylglyceryl transferase</fullName>
        <ecNumber evidence="1">2.5.1.145</ecNumber>
    </recommendedName>
</protein>
<keyword id="KW-0997">Cell inner membrane</keyword>
<keyword id="KW-1003">Cell membrane</keyword>
<keyword id="KW-0472">Membrane</keyword>
<keyword id="KW-0808">Transferase</keyword>
<keyword id="KW-0812">Transmembrane</keyword>
<keyword id="KW-1133">Transmembrane helix</keyword>
<proteinExistence type="inferred from homology"/>
<sequence>MSQGYLNFPHIDPILFQIGPLAIRWYGLMYLFGFMFALWLANKRADKPNSGWTKDQVSDLLFAGFLGVVIGGRIGYVLFYNFGYFLDNPLYLFEVWTGGMSFHGGLLGVISAMLWYGYKNNRSFFTIADFVAPLVPFGLGAGRLGNFMNGELWGRVTDVPWAMVFPSGGPFPRHPSQLYEFALEGIVLFLILNWFIRKPRPLGAVSGLFLFGYGTFRFLVEYVREPDAQLGLFGDWISMGQILSLPMVIGGLLMMVWAFKRNLYATDLKNSGDKQNSSKQKAK</sequence>
<feature type="chain" id="PRO_1000137396" description="Phosphatidylglycerol--prolipoprotein diacylglyceryl transferase">
    <location>
        <begin position="1"/>
        <end position="283"/>
    </location>
</feature>
<feature type="transmembrane region" description="Helical" evidence="1">
    <location>
        <begin position="21"/>
        <end position="41"/>
    </location>
</feature>
<feature type="transmembrane region" description="Helical" evidence="1">
    <location>
        <begin position="60"/>
        <end position="80"/>
    </location>
</feature>
<feature type="transmembrane region" description="Helical" evidence="1">
    <location>
        <begin position="95"/>
        <end position="115"/>
    </location>
</feature>
<feature type="transmembrane region" description="Helical" evidence="1">
    <location>
        <begin position="124"/>
        <end position="144"/>
    </location>
</feature>
<feature type="transmembrane region" description="Helical" evidence="1">
    <location>
        <begin position="176"/>
        <end position="196"/>
    </location>
</feature>
<feature type="transmembrane region" description="Helical" evidence="1">
    <location>
        <begin position="203"/>
        <end position="223"/>
    </location>
</feature>
<feature type="transmembrane region" description="Helical" evidence="1">
    <location>
        <begin position="239"/>
        <end position="259"/>
    </location>
</feature>
<feature type="binding site" evidence="1">
    <location>
        <position position="143"/>
    </location>
    <ligand>
        <name>a 1,2-diacyl-sn-glycero-3-phospho-(1'-sn-glycerol)</name>
        <dbReference type="ChEBI" id="CHEBI:64716"/>
    </ligand>
</feature>
<organism>
    <name type="scientific">Aliivibrio salmonicida (strain LFI1238)</name>
    <name type="common">Vibrio salmonicida (strain LFI1238)</name>
    <dbReference type="NCBI Taxonomy" id="316275"/>
    <lineage>
        <taxon>Bacteria</taxon>
        <taxon>Pseudomonadati</taxon>
        <taxon>Pseudomonadota</taxon>
        <taxon>Gammaproteobacteria</taxon>
        <taxon>Vibrionales</taxon>
        <taxon>Vibrionaceae</taxon>
        <taxon>Aliivibrio</taxon>
    </lineage>
</organism>
<evidence type="ECO:0000255" key="1">
    <source>
        <dbReference type="HAMAP-Rule" id="MF_01147"/>
    </source>
</evidence>
<name>LGT_ALISL</name>
<reference key="1">
    <citation type="journal article" date="2008" name="BMC Genomics">
        <title>The genome sequence of the fish pathogen Aliivibrio salmonicida strain LFI1238 shows extensive evidence of gene decay.</title>
        <authorList>
            <person name="Hjerde E."/>
            <person name="Lorentzen M.S."/>
            <person name="Holden M.T."/>
            <person name="Seeger K."/>
            <person name="Paulsen S."/>
            <person name="Bason N."/>
            <person name="Churcher C."/>
            <person name="Harris D."/>
            <person name="Norbertczak H."/>
            <person name="Quail M.A."/>
            <person name="Sanders S."/>
            <person name="Thurston S."/>
            <person name="Parkhill J."/>
            <person name="Willassen N.P."/>
            <person name="Thomson N.R."/>
        </authorList>
    </citation>
    <scope>NUCLEOTIDE SEQUENCE [LARGE SCALE GENOMIC DNA]</scope>
    <source>
        <strain>LFI1238</strain>
    </source>
</reference>
<comment type="function">
    <text evidence="1">Catalyzes the transfer of the diacylglyceryl group from phosphatidylglycerol to the sulfhydryl group of the N-terminal cysteine of a prolipoprotein, the first step in the formation of mature lipoproteins.</text>
</comment>
<comment type="catalytic activity">
    <reaction evidence="1">
        <text>L-cysteinyl-[prolipoprotein] + a 1,2-diacyl-sn-glycero-3-phospho-(1'-sn-glycerol) = an S-1,2-diacyl-sn-glyceryl-L-cysteinyl-[prolipoprotein] + sn-glycerol 1-phosphate + H(+)</text>
        <dbReference type="Rhea" id="RHEA:56712"/>
        <dbReference type="Rhea" id="RHEA-COMP:14679"/>
        <dbReference type="Rhea" id="RHEA-COMP:14680"/>
        <dbReference type="ChEBI" id="CHEBI:15378"/>
        <dbReference type="ChEBI" id="CHEBI:29950"/>
        <dbReference type="ChEBI" id="CHEBI:57685"/>
        <dbReference type="ChEBI" id="CHEBI:64716"/>
        <dbReference type="ChEBI" id="CHEBI:140658"/>
        <dbReference type="EC" id="2.5.1.145"/>
    </reaction>
</comment>
<comment type="pathway">
    <text evidence="1">Protein modification; lipoprotein biosynthesis (diacylglyceryl transfer).</text>
</comment>
<comment type="subcellular location">
    <subcellularLocation>
        <location evidence="1">Cell inner membrane</location>
        <topology evidence="1">Multi-pass membrane protein</topology>
    </subcellularLocation>
</comment>
<comment type="similarity">
    <text evidence="1">Belongs to the Lgt family.</text>
</comment>